<accession>P29447</accession>
<accession>Q1ZXA3</accession>
<protein>
    <recommendedName>
        <fullName>Thioredoxin-3</fullName>
        <shortName>Trx-3</shortName>
    </recommendedName>
</protein>
<sequence>MSKVIHVTSNEELDKYLQHQRVVVDFSAEWCGPCRAIAPVFDKLSNEFTTFTFVHVDIDKVNTHPIVKEIRSVPTFYFYVNGAKVSEFSGANEATLRSTLEANI</sequence>
<feature type="chain" id="PRO_0000120031" description="Thioredoxin-3">
    <location>
        <begin position="1"/>
        <end position="104"/>
    </location>
</feature>
<feature type="domain" description="Thioredoxin" evidence="2">
    <location>
        <begin position="2"/>
        <end position="104"/>
    </location>
</feature>
<feature type="active site" description="Nucleophile" evidence="1">
    <location>
        <position position="31"/>
    </location>
</feature>
<feature type="active site" description="Nucleophile" evidence="1">
    <location>
        <position position="34"/>
    </location>
</feature>
<feature type="site" description="Deprotonates C-terminal active site Cys" evidence="1">
    <location>
        <position position="25"/>
    </location>
</feature>
<feature type="site" description="Contributes to redox potential value" evidence="1">
    <location>
        <position position="32"/>
    </location>
</feature>
<feature type="site" description="Contributes to redox potential value" evidence="1">
    <location>
        <position position="33"/>
    </location>
</feature>
<feature type="disulfide bond" description="Redox-active" evidence="2">
    <location>
        <begin position="31"/>
        <end position="34"/>
    </location>
</feature>
<feature type="sequence conflict" description="In Ref. 1; AAA33260." evidence="3" ref="1">
    <original>V</original>
    <variation>G</variation>
    <location>
        <position position="67"/>
    </location>
</feature>
<gene>
    <name type="primary">trxC</name>
    <name type="synonym">trx3</name>
    <name type="ORF">DDB_G0294489</name>
</gene>
<organism>
    <name type="scientific">Dictyostelium discoideum</name>
    <name type="common">Social amoeba</name>
    <dbReference type="NCBI Taxonomy" id="44689"/>
    <lineage>
        <taxon>Eukaryota</taxon>
        <taxon>Amoebozoa</taxon>
        <taxon>Evosea</taxon>
        <taxon>Eumycetozoa</taxon>
        <taxon>Dictyostelia</taxon>
        <taxon>Dictyosteliales</taxon>
        <taxon>Dictyosteliaceae</taxon>
        <taxon>Dictyostelium</taxon>
    </lineage>
</organism>
<proteinExistence type="inferred from homology"/>
<keyword id="KW-1015">Disulfide bond</keyword>
<keyword id="KW-0249">Electron transport</keyword>
<keyword id="KW-0676">Redox-active center</keyword>
<keyword id="KW-1185">Reference proteome</keyword>
<keyword id="KW-0813">Transport</keyword>
<evidence type="ECO:0000250" key="1"/>
<evidence type="ECO:0000255" key="2">
    <source>
        <dbReference type="PROSITE-ProRule" id="PRU00691"/>
    </source>
</evidence>
<evidence type="ECO:0000305" key="3"/>
<name>THIO3_DICDI</name>
<dbReference type="EMBL" id="M91383">
    <property type="protein sequence ID" value="AAA33260.1"/>
    <property type="molecule type" value="mRNA"/>
</dbReference>
<dbReference type="EMBL" id="AAFI02000199">
    <property type="protein sequence ID" value="EAS66808.2"/>
    <property type="molecule type" value="Genomic_DNA"/>
</dbReference>
<dbReference type="PIR" id="C46264">
    <property type="entry name" value="C46264"/>
</dbReference>
<dbReference type="RefSeq" id="XP_001134491.2">
    <property type="nucleotide sequence ID" value="XM_001134491.2"/>
</dbReference>
<dbReference type="SMR" id="P29447"/>
<dbReference type="FunCoup" id="P29447">
    <property type="interactions" value="194"/>
</dbReference>
<dbReference type="STRING" id="44689.P29447"/>
<dbReference type="PaxDb" id="44689-DDB0233050"/>
<dbReference type="EnsemblProtists" id="EAS66808">
    <property type="protein sequence ID" value="EAS66808"/>
    <property type="gene ID" value="DDB_G0294489"/>
</dbReference>
<dbReference type="GeneID" id="8628985"/>
<dbReference type="KEGG" id="ddi:DDB_G0294489"/>
<dbReference type="dictyBase" id="DDB_G0294489">
    <property type="gene designation" value="trxC"/>
</dbReference>
<dbReference type="VEuPathDB" id="AmoebaDB:DDB_G0294489"/>
<dbReference type="eggNOG" id="KOG0907">
    <property type="taxonomic scope" value="Eukaryota"/>
</dbReference>
<dbReference type="HOGENOM" id="CLU_090389_14_6_1"/>
<dbReference type="InParanoid" id="P29447"/>
<dbReference type="OMA" id="STWHETH"/>
<dbReference type="PhylomeDB" id="P29447"/>
<dbReference type="Reactome" id="R-DDI-3299685">
    <property type="pathway name" value="Detoxification of Reactive Oxygen Species"/>
</dbReference>
<dbReference type="Reactome" id="R-DDI-499943">
    <property type="pathway name" value="Interconversion of nucleotide di- and triphosphates"/>
</dbReference>
<dbReference type="Reactome" id="R-DDI-5628897">
    <property type="pathway name" value="TP53 Regulates Metabolic Genes"/>
</dbReference>
<dbReference type="Reactome" id="R-DDI-844456">
    <property type="pathway name" value="The NLRP3 inflammasome"/>
</dbReference>
<dbReference type="PRO" id="PR:P29447"/>
<dbReference type="Proteomes" id="UP000002195">
    <property type="component" value="Chromosome 6"/>
</dbReference>
<dbReference type="GO" id="GO:0031012">
    <property type="term" value="C:extracellular matrix"/>
    <property type="evidence" value="ECO:0007005"/>
    <property type="project" value="dictyBase"/>
</dbReference>
<dbReference type="GO" id="GO:0015036">
    <property type="term" value="F:disulfide oxidoreductase activity"/>
    <property type="evidence" value="ECO:0000250"/>
    <property type="project" value="dictyBase"/>
</dbReference>
<dbReference type="GO" id="GO:0003756">
    <property type="term" value="F:protein disulfide isomerase activity"/>
    <property type="evidence" value="ECO:0000250"/>
    <property type="project" value="dictyBase"/>
</dbReference>
<dbReference type="GO" id="GO:0015035">
    <property type="term" value="F:protein-disulfide reductase activity"/>
    <property type="evidence" value="ECO:0007669"/>
    <property type="project" value="InterPro"/>
</dbReference>
<dbReference type="CDD" id="cd02947">
    <property type="entry name" value="TRX_family"/>
    <property type="match status" value="1"/>
</dbReference>
<dbReference type="FunFam" id="3.40.30.10:FF:000245">
    <property type="entry name" value="Thioredoxin"/>
    <property type="match status" value="1"/>
</dbReference>
<dbReference type="Gene3D" id="3.40.30.10">
    <property type="entry name" value="Glutaredoxin"/>
    <property type="match status" value="1"/>
</dbReference>
<dbReference type="InterPro" id="IPR005746">
    <property type="entry name" value="Thioredoxin"/>
</dbReference>
<dbReference type="InterPro" id="IPR036249">
    <property type="entry name" value="Thioredoxin-like_sf"/>
</dbReference>
<dbReference type="InterPro" id="IPR017937">
    <property type="entry name" value="Thioredoxin_CS"/>
</dbReference>
<dbReference type="InterPro" id="IPR013766">
    <property type="entry name" value="Thioredoxin_domain"/>
</dbReference>
<dbReference type="PANTHER" id="PTHR46115">
    <property type="entry name" value="THIOREDOXIN-LIKE PROTEIN 1"/>
    <property type="match status" value="1"/>
</dbReference>
<dbReference type="Pfam" id="PF00085">
    <property type="entry name" value="Thioredoxin"/>
    <property type="match status" value="1"/>
</dbReference>
<dbReference type="PIRSF" id="PIRSF000077">
    <property type="entry name" value="Thioredoxin"/>
    <property type="match status" value="1"/>
</dbReference>
<dbReference type="PRINTS" id="PR00421">
    <property type="entry name" value="THIOREDOXIN"/>
</dbReference>
<dbReference type="SUPFAM" id="SSF52833">
    <property type="entry name" value="Thioredoxin-like"/>
    <property type="match status" value="1"/>
</dbReference>
<dbReference type="PROSITE" id="PS00194">
    <property type="entry name" value="THIOREDOXIN_1"/>
    <property type="match status" value="1"/>
</dbReference>
<dbReference type="PROSITE" id="PS51352">
    <property type="entry name" value="THIOREDOXIN_2"/>
    <property type="match status" value="1"/>
</dbReference>
<reference key="1">
    <citation type="journal article" date="1992" name="J. Biol. Chem.">
        <title>Thioredoxins from Dictyostelium discoideum are a developmentally regulated multigene family.</title>
        <authorList>
            <person name="Wetterauer B."/>
            <person name="Jacquot J.-P."/>
            <person name="Veron M."/>
        </authorList>
    </citation>
    <scope>NUCLEOTIDE SEQUENCE [MRNA]</scope>
    <source>
        <strain>AX3</strain>
    </source>
</reference>
<reference key="2">
    <citation type="journal article" date="2005" name="Nature">
        <title>The genome of the social amoeba Dictyostelium discoideum.</title>
        <authorList>
            <person name="Eichinger L."/>
            <person name="Pachebat J.A."/>
            <person name="Gloeckner G."/>
            <person name="Rajandream M.A."/>
            <person name="Sucgang R."/>
            <person name="Berriman M."/>
            <person name="Song J."/>
            <person name="Olsen R."/>
            <person name="Szafranski K."/>
            <person name="Xu Q."/>
            <person name="Tunggal B."/>
            <person name="Kummerfeld S."/>
            <person name="Madera M."/>
            <person name="Konfortov B.A."/>
            <person name="Rivero F."/>
            <person name="Bankier A.T."/>
            <person name="Lehmann R."/>
            <person name="Hamlin N."/>
            <person name="Davies R."/>
            <person name="Gaudet P."/>
            <person name="Fey P."/>
            <person name="Pilcher K."/>
            <person name="Chen G."/>
            <person name="Saunders D."/>
            <person name="Sodergren E.J."/>
            <person name="Davis P."/>
            <person name="Kerhornou A."/>
            <person name="Nie X."/>
            <person name="Hall N."/>
            <person name="Anjard C."/>
            <person name="Hemphill L."/>
            <person name="Bason N."/>
            <person name="Farbrother P."/>
            <person name="Desany B."/>
            <person name="Just E."/>
            <person name="Morio T."/>
            <person name="Rost R."/>
            <person name="Churcher C.M."/>
            <person name="Cooper J."/>
            <person name="Haydock S."/>
            <person name="van Driessche N."/>
            <person name="Cronin A."/>
            <person name="Goodhead I."/>
            <person name="Muzny D.M."/>
            <person name="Mourier T."/>
            <person name="Pain A."/>
            <person name="Lu M."/>
            <person name="Harper D."/>
            <person name="Lindsay R."/>
            <person name="Hauser H."/>
            <person name="James K.D."/>
            <person name="Quiles M."/>
            <person name="Madan Babu M."/>
            <person name="Saito T."/>
            <person name="Buchrieser C."/>
            <person name="Wardroper A."/>
            <person name="Felder M."/>
            <person name="Thangavelu M."/>
            <person name="Johnson D."/>
            <person name="Knights A."/>
            <person name="Loulseged H."/>
            <person name="Mungall K.L."/>
            <person name="Oliver K."/>
            <person name="Price C."/>
            <person name="Quail M.A."/>
            <person name="Urushihara H."/>
            <person name="Hernandez J."/>
            <person name="Rabbinowitsch E."/>
            <person name="Steffen D."/>
            <person name="Sanders M."/>
            <person name="Ma J."/>
            <person name="Kohara Y."/>
            <person name="Sharp S."/>
            <person name="Simmonds M.N."/>
            <person name="Spiegler S."/>
            <person name="Tivey A."/>
            <person name="Sugano S."/>
            <person name="White B."/>
            <person name="Walker D."/>
            <person name="Woodward J.R."/>
            <person name="Winckler T."/>
            <person name="Tanaka Y."/>
            <person name="Shaulsky G."/>
            <person name="Schleicher M."/>
            <person name="Weinstock G.M."/>
            <person name="Rosenthal A."/>
            <person name="Cox E.C."/>
            <person name="Chisholm R.L."/>
            <person name="Gibbs R.A."/>
            <person name="Loomis W.F."/>
            <person name="Platzer M."/>
            <person name="Kay R.R."/>
            <person name="Williams J.G."/>
            <person name="Dear P.H."/>
            <person name="Noegel A.A."/>
            <person name="Barrell B.G."/>
            <person name="Kuspa A."/>
        </authorList>
    </citation>
    <scope>NUCLEOTIDE SEQUENCE [LARGE SCALE GENOMIC DNA]</scope>
    <source>
        <strain>AX4</strain>
    </source>
</reference>
<comment type="function">
    <text>Participates in various redox reactions through the reversible oxidation of its active center dithiol to a disulfide and catalyzes dithiol-disulfide exchange reactions.</text>
</comment>
<comment type="similarity">
    <text evidence="3">Belongs to the thioredoxin family.</text>
</comment>